<keyword id="KW-0963">Cytoplasm</keyword>
<keyword id="KW-0227">DNA damage</keyword>
<keyword id="KW-0228">DNA excision</keyword>
<keyword id="KW-0234">DNA repair</keyword>
<keyword id="KW-0267">Excision nuclease</keyword>
<keyword id="KW-1185">Reference proteome</keyword>
<keyword id="KW-0742">SOS response</keyword>
<organism>
    <name type="scientific">Citrifermentans bemidjiense (strain ATCC BAA-1014 / DSM 16622 / JCM 12645 / Bem)</name>
    <name type="common">Geobacter bemidjiensis</name>
    <dbReference type="NCBI Taxonomy" id="404380"/>
    <lineage>
        <taxon>Bacteria</taxon>
        <taxon>Pseudomonadati</taxon>
        <taxon>Thermodesulfobacteriota</taxon>
        <taxon>Desulfuromonadia</taxon>
        <taxon>Geobacterales</taxon>
        <taxon>Geobacteraceae</taxon>
        <taxon>Citrifermentans</taxon>
    </lineage>
</organism>
<gene>
    <name evidence="1" type="primary">uvrC</name>
    <name type="ordered locus">Gbem_3961</name>
</gene>
<dbReference type="EMBL" id="CP001124">
    <property type="protein sequence ID" value="ACH40953.1"/>
    <property type="molecule type" value="Genomic_DNA"/>
</dbReference>
<dbReference type="RefSeq" id="WP_012532387.1">
    <property type="nucleotide sequence ID" value="NC_011146.1"/>
</dbReference>
<dbReference type="SMR" id="B5EG40"/>
<dbReference type="STRING" id="404380.Gbem_3961"/>
<dbReference type="KEGG" id="gbm:Gbem_3961"/>
<dbReference type="eggNOG" id="COG0322">
    <property type="taxonomic scope" value="Bacteria"/>
</dbReference>
<dbReference type="HOGENOM" id="CLU_014841_3_2_7"/>
<dbReference type="OrthoDB" id="9804933at2"/>
<dbReference type="Proteomes" id="UP000008825">
    <property type="component" value="Chromosome"/>
</dbReference>
<dbReference type="GO" id="GO:0005737">
    <property type="term" value="C:cytoplasm"/>
    <property type="evidence" value="ECO:0007669"/>
    <property type="project" value="UniProtKB-SubCell"/>
</dbReference>
<dbReference type="GO" id="GO:0009380">
    <property type="term" value="C:excinuclease repair complex"/>
    <property type="evidence" value="ECO:0007669"/>
    <property type="project" value="InterPro"/>
</dbReference>
<dbReference type="GO" id="GO:0003677">
    <property type="term" value="F:DNA binding"/>
    <property type="evidence" value="ECO:0007669"/>
    <property type="project" value="UniProtKB-UniRule"/>
</dbReference>
<dbReference type="GO" id="GO:0009381">
    <property type="term" value="F:excinuclease ABC activity"/>
    <property type="evidence" value="ECO:0007669"/>
    <property type="project" value="UniProtKB-UniRule"/>
</dbReference>
<dbReference type="GO" id="GO:0006289">
    <property type="term" value="P:nucleotide-excision repair"/>
    <property type="evidence" value="ECO:0007669"/>
    <property type="project" value="UniProtKB-UniRule"/>
</dbReference>
<dbReference type="GO" id="GO:0009432">
    <property type="term" value="P:SOS response"/>
    <property type="evidence" value="ECO:0007669"/>
    <property type="project" value="UniProtKB-UniRule"/>
</dbReference>
<dbReference type="CDD" id="cd10434">
    <property type="entry name" value="GIY-YIG_UvrC_Cho"/>
    <property type="match status" value="1"/>
</dbReference>
<dbReference type="FunFam" id="3.40.1440.10:FF:000001">
    <property type="entry name" value="UvrABC system protein C"/>
    <property type="match status" value="1"/>
</dbReference>
<dbReference type="Gene3D" id="1.10.150.20">
    <property type="entry name" value="5' to 3' exonuclease, C-terminal subdomain"/>
    <property type="match status" value="1"/>
</dbReference>
<dbReference type="Gene3D" id="3.40.1440.10">
    <property type="entry name" value="GIY-YIG endonuclease"/>
    <property type="match status" value="1"/>
</dbReference>
<dbReference type="Gene3D" id="3.30.420.340">
    <property type="entry name" value="UvrC, RNAse H endonuclease domain"/>
    <property type="match status" value="1"/>
</dbReference>
<dbReference type="HAMAP" id="MF_00203">
    <property type="entry name" value="UvrC"/>
    <property type="match status" value="1"/>
</dbReference>
<dbReference type="InterPro" id="IPR000305">
    <property type="entry name" value="GIY-YIG_endonuc"/>
</dbReference>
<dbReference type="InterPro" id="IPR035901">
    <property type="entry name" value="GIY-YIG_endonuc_sf"/>
</dbReference>
<dbReference type="InterPro" id="IPR047296">
    <property type="entry name" value="GIY-YIG_UvrC_Cho"/>
</dbReference>
<dbReference type="InterPro" id="IPR003583">
    <property type="entry name" value="Hlx-hairpin-Hlx_DNA-bd_motif"/>
</dbReference>
<dbReference type="InterPro" id="IPR010994">
    <property type="entry name" value="RuvA_2-like"/>
</dbReference>
<dbReference type="InterPro" id="IPR001943">
    <property type="entry name" value="UVR_dom"/>
</dbReference>
<dbReference type="InterPro" id="IPR036876">
    <property type="entry name" value="UVR_dom_sf"/>
</dbReference>
<dbReference type="InterPro" id="IPR050066">
    <property type="entry name" value="UvrABC_protein_C"/>
</dbReference>
<dbReference type="InterPro" id="IPR004791">
    <property type="entry name" value="UvrC"/>
</dbReference>
<dbReference type="InterPro" id="IPR001162">
    <property type="entry name" value="UvrC_RNase_H_dom"/>
</dbReference>
<dbReference type="InterPro" id="IPR038476">
    <property type="entry name" value="UvrC_RNase_H_dom_sf"/>
</dbReference>
<dbReference type="NCBIfam" id="NF001824">
    <property type="entry name" value="PRK00558.1-5"/>
    <property type="match status" value="1"/>
</dbReference>
<dbReference type="NCBIfam" id="TIGR00194">
    <property type="entry name" value="uvrC"/>
    <property type="match status" value="1"/>
</dbReference>
<dbReference type="PANTHER" id="PTHR30562:SF1">
    <property type="entry name" value="UVRABC SYSTEM PROTEIN C"/>
    <property type="match status" value="1"/>
</dbReference>
<dbReference type="PANTHER" id="PTHR30562">
    <property type="entry name" value="UVRC/OXIDOREDUCTASE"/>
    <property type="match status" value="1"/>
</dbReference>
<dbReference type="Pfam" id="PF01541">
    <property type="entry name" value="GIY-YIG"/>
    <property type="match status" value="1"/>
</dbReference>
<dbReference type="Pfam" id="PF14520">
    <property type="entry name" value="HHH_5"/>
    <property type="match status" value="1"/>
</dbReference>
<dbReference type="Pfam" id="PF02151">
    <property type="entry name" value="UVR"/>
    <property type="match status" value="1"/>
</dbReference>
<dbReference type="Pfam" id="PF22920">
    <property type="entry name" value="UvrC_RNaseH"/>
    <property type="match status" value="1"/>
</dbReference>
<dbReference type="Pfam" id="PF08459">
    <property type="entry name" value="UvrC_RNaseH_dom"/>
    <property type="match status" value="1"/>
</dbReference>
<dbReference type="SMART" id="SM00465">
    <property type="entry name" value="GIYc"/>
    <property type="match status" value="1"/>
</dbReference>
<dbReference type="SMART" id="SM00278">
    <property type="entry name" value="HhH1"/>
    <property type="match status" value="2"/>
</dbReference>
<dbReference type="SUPFAM" id="SSF46600">
    <property type="entry name" value="C-terminal UvrC-binding domain of UvrB"/>
    <property type="match status" value="1"/>
</dbReference>
<dbReference type="SUPFAM" id="SSF82771">
    <property type="entry name" value="GIY-YIG endonuclease"/>
    <property type="match status" value="1"/>
</dbReference>
<dbReference type="SUPFAM" id="SSF47781">
    <property type="entry name" value="RuvA domain 2-like"/>
    <property type="match status" value="1"/>
</dbReference>
<dbReference type="PROSITE" id="PS50164">
    <property type="entry name" value="GIY_YIG"/>
    <property type="match status" value="1"/>
</dbReference>
<dbReference type="PROSITE" id="PS50151">
    <property type="entry name" value="UVR"/>
    <property type="match status" value="1"/>
</dbReference>
<dbReference type="PROSITE" id="PS50165">
    <property type="entry name" value="UVRC"/>
    <property type="match status" value="1"/>
</dbReference>
<protein>
    <recommendedName>
        <fullName evidence="1">UvrABC system protein C</fullName>
        <shortName evidence="1">Protein UvrC</shortName>
    </recommendedName>
    <alternativeName>
        <fullName evidence="1">Excinuclease ABC subunit C</fullName>
    </alternativeName>
</protein>
<name>UVRC_CITBB</name>
<accession>B5EG40</accession>
<feature type="chain" id="PRO_1000099485" description="UvrABC system protein C">
    <location>
        <begin position="1"/>
        <end position="623"/>
    </location>
</feature>
<feature type="domain" description="GIY-YIG" evidence="1">
    <location>
        <begin position="12"/>
        <end position="91"/>
    </location>
</feature>
<feature type="domain" description="UVR" evidence="1">
    <location>
        <begin position="201"/>
        <end position="236"/>
    </location>
</feature>
<feature type="region of interest" description="Disordered" evidence="2">
    <location>
        <begin position="603"/>
        <end position="623"/>
    </location>
</feature>
<sequence>MITQAMIENFPPSPGVYLMKSADDTVIYVGKARNLKKRVRSYAGDTRDSRIHIRFMVQLVHSVDYLVTDTEKEALILENTLIKQHRPKYNINLRDDKTYFSLRMDMKEQFPRLSIVRKIPSDGARYFGPYASATAAKEVLKQLYKMFPLRHYPLATCMARKRPCLYHQIKQCSAPCCGLISAAEYAALAHGAALFLEGKNTEVARLYRSKMNLAAEQMRYEDAARYRDLLRAIEVTVERQKMVAQSDDSDVFGLHREADRMQIALLHIRGGTLTGGRSFLFDWELETEEGLASFLNEYYDLDAPIPPQVLIPVPIAEPAALEELLSEKAGKKVTIAVPQRGPKLEMVKLAGKNAETAAQERLARESSSATLLTELAEKLNLPHPPRRIECYDISNIQGEMAVGSRVVFIDGRADKSLYRRYRIKGVLQSDDFAMMREVLSRRFKAESSEEKPDLIVVDGGLGQLGVLNAVLDELEVTGVEAAGLAKSRVARDMESEEIERSDERVFRPGRKNAIALRQSSAPLLLLVRIRDEAHRFAVTYHKDVRSKVLTGSELDGVAGIGEKRKKALLKHFGSLKRVKEATLEELKGAPGMTESAAKALVERLHGSPLPNPPPPGEGAMDRK</sequence>
<comment type="function">
    <text evidence="1">The UvrABC repair system catalyzes the recognition and processing of DNA lesions. UvrC both incises the 5' and 3' sides of the lesion. The N-terminal half is responsible for the 3' incision and the C-terminal half is responsible for the 5' incision.</text>
</comment>
<comment type="subunit">
    <text evidence="1">Interacts with UvrB in an incision complex.</text>
</comment>
<comment type="subcellular location">
    <subcellularLocation>
        <location evidence="1">Cytoplasm</location>
    </subcellularLocation>
</comment>
<comment type="similarity">
    <text evidence="1">Belongs to the UvrC family.</text>
</comment>
<proteinExistence type="inferred from homology"/>
<reference key="1">
    <citation type="submission" date="2008-07" db="EMBL/GenBank/DDBJ databases">
        <title>Complete sequence of Geobacter bemidjiensis BEM.</title>
        <authorList>
            <consortium name="US DOE Joint Genome Institute"/>
            <person name="Lucas S."/>
            <person name="Copeland A."/>
            <person name="Lapidus A."/>
            <person name="Glavina del Rio T."/>
            <person name="Dalin E."/>
            <person name="Tice H."/>
            <person name="Bruce D."/>
            <person name="Goodwin L."/>
            <person name="Pitluck S."/>
            <person name="Kiss H."/>
            <person name="Brettin T."/>
            <person name="Detter J.C."/>
            <person name="Han C."/>
            <person name="Kuske C.R."/>
            <person name="Schmutz J."/>
            <person name="Larimer F."/>
            <person name="Land M."/>
            <person name="Hauser L."/>
            <person name="Kyrpides N."/>
            <person name="Lykidis A."/>
            <person name="Lovley D."/>
            <person name="Richardson P."/>
        </authorList>
    </citation>
    <scope>NUCLEOTIDE SEQUENCE [LARGE SCALE GENOMIC DNA]</scope>
    <source>
        <strain>ATCC BAA-1014 / DSM 16622 / JCM 12645 / Bem</strain>
    </source>
</reference>
<evidence type="ECO:0000255" key="1">
    <source>
        <dbReference type="HAMAP-Rule" id="MF_00203"/>
    </source>
</evidence>
<evidence type="ECO:0000256" key="2">
    <source>
        <dbReference type="SAM" id="MobiDB-lite"/>
    </source>
</evidence>